<feature type="chain" id="PRO_0000228504" description="Ribonuclease 3">
    <location>
        <begin position="1"/>
        <end position="229"/>
    </location>
</feature>
<feature type="domain" description="RNase III" evidence="1">
    <location>
        <begin position="3"/>
        <end position="125"/>
    </location>
</feature>
<feature type="domain" description="DRBM" evidence="1">
    <location>
        <begin position="155"/>
        <end position="225"/>
    </location>
</feature>
<feature type="active site" evidence="1">
    <location>
        <position position="42"/>
    </location>
</feature>
<feature type="active site" evidence="1">
    <location>
        <position position="114"/>
    </location>
</feature>
<feature type="binding site" evidence="1">
    <location>
        <position position="38"/>
    </location>
    <ligand>
        <name>Mg(2+)</name>
        <dbReference type="ChEBI" id="CHEBI:18420"/>
    </ligand>
</feature>
<feature type="binding site" evidence="1">
    <location>
        <position position="111"/>
    </location>
    <ligand>
        <name>Mg(2+)</name>
        <dbReference type="ChEBI" id="CHEBI:18420"/>
    </ligand>
</feature>
<feature type="binding site" evidence="1">
    <location>
        <position position="114"/>
    </location>
    <ligand>
        <name>Mg(2+)</name>
        <dbReference type="ChEBI" id="CHEBI:18420"/>
    </ligand>
</feature>
<name>RNC_BLOPB</name>
<comment type="function">
    <text evidence="1">Digests double-stranded RNA. Involved in the processing of primary rRNA transcript to yield the immediate precursors to the large and small rRNAs (23S and 16S). Processes some mRNAs, and tRNAs when they are encoded in the rRNA operon. Processes pre-crRNA and tracrRNA of type II CRISPR loci if present in the organism.</text>
</comment>
<comment type="catalytic activity">
    <reaction evidence="1">
        <text>Endonucleolytic cleavage to 5'-phosphomonoester.</text>
        <dbReference type="EC" id="3.1.26.3"/>
    </reaction>
</comment>
<comment type="cofactor">
    <cofactor evidence="1">
        <name>Mg(2+)</name>
        <dbReference type="ChEBI" id="CHEBI:18420"/>
    </cofactor>
</comment>
<comment type="subunit">
    <text evidence="1">Homodimer.</text>
</comment>
<comment type="subcellular location">
    <subcellularLocation>
        <location evidence="1">Cytoplasm</location>
    </subcellularLocation>
</comment>
<comment type="similarity">
    <text evidence="1">Belongs to the ribonuclease III family.</text>
</comment>
<protein>
    <recommendedName>
        <fullName evidence="1">Ribonuclease 3</fullName>
        <ecNumber evidence="1">3.1.26.3</ecNumber>
    </recommendedName>
    <alternativeName>
        <fullName evidence="1">Ribonuclease III</fullName>
        <shortName evidence="1">RNase III</shortName>
    </alternativeName>
</protein>
<sequence length="229" mass="26358">MLVNALQEKLGYIFNRYDLLLQALTHRSSSNQHNERLEFLGDAILNYVIANLLYHRFPHISEGGMSRMRANLVRENTLATLAREFNLGDYLQLGQGELKSGGYQRESILANTIEALIGGIFLDSNIQTIEILIINWYKIRIDHMDPYASYDTQKDPKTRLQEYMQRRRLPLPVYWINQIIGEAHNQIFTINCQVSELTQPIIGCGSSRRRAEQNAAAKVLEALEHNQNI</sequence>
<keyword id="KW-0963">Cytoplasm</keyword>
<keyword id="KW-0255">Endonuclease</keyword>
<keyword id="KW-0378">Hydrolase</keyword>
<keyword id="KW-0460">Magnesium</keyword>
<keyword id="KW-0479">Metal-binding</keyword>
<keyword id="KW-0507">mRNA processing</keyword>
<keyword id="KW-0540">Nuclease</keyword>
<keyword id="KW-1185">Reference proteome</keyword>
<keyword id="KW-0694">RNA-binding</keyword>
<keyword id="KW-0698">rRNA processing</keyword>
<keyword id="KW-0699">rRNA-binding</keyword>
<keyword id="KW-0819">tRNA processing</keyword>
<gene>
    <name evidence="1" type="primary">rnc</name>
    <name type="ordered locus">BPEN_560</name>
</gene>
<organism>
    <name type="scientific">Blochmanniella pennsylvanica (strain BPEN)</name>
    <dbReference type="NCBI Taxonomy" id="291272"/>
    <lineage>
        <taxon>Bacteria</taxon>
        <taxon>Pseudomonadati</taxon>
        <taxon>Pseudomonadota</taxon>
        <taxon>Gammaproteobacteria</taxon>
        <taxon>Enterobacterales</taxon>
        <taxon>Enterobacteriaceae</taxon>
        <taxon>ant endosymbionts</taxon>
        <taxon>Candidatus Blochmanniella</taxon>
    </lineage>
</organism>
<dbReference type="EC" id="3.1.26.3" evidence="1"/>
<dbReference type="EMBL" id="CP000016">
    <property type="protein sequence ID" value="AAZ41170.1"/>
    <property type="molecule type" value="Genomic_DNA"/>
</dbReference>
<dbReference type="SMR" id="Q492D1"/>
<dbReference type="STRING" id="291272.BPEN_560"/>
<dbReference type="KEGG" id="bpn:BPEN_560"/>
<dbReference type="eggNOG" id="COG0571">
    <property type="taxonomic scope" value="Bacteria"/>
</dbReference>
<dbReference type="HOGENOM" id="CLU_000907_1_1_6"/>
<dbReference type="Proteomes" id="UP000007794">
    <property type="component" value="Chromosome"/>
</dbReference>
<dbReference type="GO" id="GO:0005737">
    <property type="term" value="C:cytoplasm"/>
    <property type="evidence" value="ECO:0007669"/>
    <property type="project" value="UniProtKB-SubCell"/>
</dbReference>
<dbReference type="GO" id="GO:0003725">
    <property type="term" value="F:double-stranded RNA binding"/>
    <property type="evidence" value="ECO:0007669"/>
    <property type="project" value="TreeGrafter"/>
</dbReference>
<dbReference type="GO" id="GO:0046872">
    <property type="term" value="F:metal ion binding"/>
    <property type="evidence" value="ECO:0007669"/>
    <property type="project" value="UniProtKB-KW"/>
</dbReference>
<dbReference type="GO" id="GO:0004525">
    <property type="term" value="F:ribonuclease III activity"/>
    <property type="evidence" value="ECO:0007669"/>
    <property type="project" value="UniProtKB-UniRule"/>
</dbReference>
<dbReference type="GO" id="GO:0019843">
    <property type="term" value="F:rRNA binding"/>
    <property type="evidence" value="ECO:0007669"/>
    <property type="project" value="UniProtKB-KW"/>
</dbReference>
<dbReference type="GO" id="GO:0006397">
    <property type="term" value="P:mRNA processing"/>
    <property type="evidence" value="ECO:0007669"/>
    <property type="project" value="UniProtKB-UniRule"/>
</dbReference>
<dbReference type="GO" id="GO:0010468">
    <property type="term" value="P:regulation of gene expression"/>
    <property type="evidence" value="ECO:0007669"/>
    <property type="project" value="TreeGrafter"/>
</dbReference>
<dbReference type="GO" id="GO:0006364">
    <property type="term" value="P:rRNA processing"/>
    <property type="evidence" value="ECO:0007669"/>
    <property type="project" value="UniProtKB-UniRule"/>
</dbReference>
<dbReference type="GO" id="GO:0008033">
    <property type="term" value="P:tRNA processing"/>
    <property type="evidence" value="ECO:0007669"/>
    <property type="project" value="UniProtKB-KW"/>
</dbReference>
<dbReference type="CDD" id="cd10845">
    <property type="entry name" value="DSRM_RNAse_III_family"/>
    <property type="match status" value="1"/>
</dbReference>
<dbReference type="CDD" id="cd00593">
    <property type="entry name" value="RIBOc"/>
    <property type="match status" value="1"/>
</dbReference>
<dbReference type="FunFam" id="1.10.1520.10:FF:000001">
    <property type="entry name" value="Ribonuclease 3"/>
    <property type="match status" value="1"/>
</dbReference>
<dbReference type="FunFam" id="3.30.160.20:FF:000003">
    <property type="entry name" value="Ribonuclease 3"/>
    <property type="match status" value="1"/>
</dbReference>
<dbReference type="Gene3D" id="3.30.160.20">
    <property type="match status" value="1"/>
</dbReference>
<dbReference type="Gene3D" id="1.10.1520.10">
    <property type="entry name" value="Ribonuclease III domain"/>
    <property type="match status" value="1"/>
</dbReference>
<dbReference type="HAMAP" id="MF_00104">
    <property type="entry name" value="RNase_III"/>
    <property type="match status" value="1"/>
</dbReference>
<dbReference type="InterPro" id="IPR014720">
    <property type="entry name" value="dsRBD_dom"/>
</dbReference>
<dbReference type="InterPro" id="IPR011907">
    <property type="entry name" value="RNase_III"/>
</dbReference>
<dbReference type="InterPro" id="IPR000999">
    <property type="entry name" value="RNase_III_dom"/>
</dbReference>
<dbReference type="InterPro" id="IPR036389">
    <property type="entry name" value="RNase_III_sf"/>
</dbReference>
<dbReference type="NCBIfam" id="TIGR02191">
    <property type="entry name" value="RNaseIII"/>
    <property type="match status" value="1"/>
</dbReference>
<dbReference type="PANTHER" id="PTHR11207:SF0">
    <property type="entry name" value="RIBONUCLEASE 3"/>
    <property type="match status" value="1"/>
</dbReference>
<dbReference type="PANTHER" id="PTHR11207">
    <property type="entry name" value="RIBONUCLEASE III"/>
    <property type="match status" value="1"/>
</dbReference>
<dbReference type="Pfam" id="PF00035">
    <property type="entry name" value="dsrm"/>
    <property type="match status" value="1"/>
</dbReference>
<dbReference type="Pfam" id="PF14622">
    <property type="entry name" value="Ribonucleas_3_3"/>
    <property type="match status" value="1"/>
</dbReference>
<dbReference type="SMART" id="SM00358">
    <property type="entry name" value="DSRM"/>
    <property type="match status" value="1"/>
</dbReference>
<dbReference type="SMART" id="SM00535">
    <property type="entry name" value="RIBOc"/>
    <property type="match status" value="1"/>
</dbReference>
<dbReference type="SUPFAM" id="SSF54768">
    <property type="entry name" value="dsRNA-binding domain-like"/>
    <property type="match status" value="1"/>
</dbReference>
<dbReference type="SUPFAM" id="SSF69065">
    <property type="entry name" value="RNase III domain-like"/>
    <property type="match status" value="1"/>
</dbReference>
<dbReference type="PROSITE" id="PS50137">
    <property type="entry name" value="DS_RBD"/>
    <property type="match status" value="1"/>
</dbReference>
<dbReference type="PROSITE" id="PS00517">
    <property type="entry name" value="RNASE_3_1"/>
    <property type="match status" value="1"/>
</dbReference>
<dbReference type="PROSITE" id="PS50142">
    <property type="entry name" value="RNASE_3_2"/>
    <property type="match status" value="1"/>
</dbReference>
<reference key="1">
    <citation type="journal article" date="2005" name="Genome Res.">
        <title>Genome sequence of Blochmannia pennsylvanicus indicates parallel evolutionary trends among bacterial mutualists of insects.</title>
        <authorList>
            <person name="Degnan P.H."/>
            <person name="Lazarus A.B."/>
            <person name="Wernegreen J.J."/>
        </authorList>
    </citation>
    <scope>NUCLEOTIDE SEQUENCE [LARGE SCALE GENOMIC DNA]</scope>
    <source>
        <strain>BPEN</strain>
    </source>
</reference>
<proteinExistence type="inferred from homology"/>
<accession>Q492D1</accession>
<evidence type="ECO:0000255" key="1">
    <source>
        <dbReference type="HAMAP-Rule" id="MF_00104"/>
    </source>
</evidence>